<dbReference type="EC" id="3.6.5.-" evidence="2"/>
<dbReference type="EMBL" id="M13442">
    <property type="protein sequence ID" value="AAA40501.1"/>
    <property type="molecule type" value="mRNA"/>
</dbReference>
<dbReference type="EMBL" id="M13443">
    <property type="protein sequence ID" value="AAA40504.1"/>
    <property type="molecule type" value="mRNA"/>
</dbReference>
<dbReference type="EMBL" id="BC050769">
    <property type="protein sequence ID" value="AAH50769.1"/>
    <property type="molecule type" value="mRNA"/>
</dbReference>
<dbReference type="EMBL" id="BC050770">
    <property type="protein sequence ID" value="AAH50770.1"/>
    <property type="molecule type" value="mRNA"/>
</dbReference>
<dbReference type="CCDS" id="CCDS39640.1"/>
<dbReference type="CCDS" id="CCDS39707.1"/>
<dbReference type="PIR" id="I77426">
    <property type="entry name" value="I77426"/>
</dbReference>
<dbReference type="RefSeq" id="NP_033472.1">
    <property type="nucleotide sequence ID" value="NM_009446.3"/>
</dbReference>
<dbReference type="RefSeq" id="NP_033475.1">
    <property type="nucleotide sequence ID" value="NM_009449.3"/>
</dbReference>
<dbReference type="PDB" id="8I7O">
    <property type="method" value="EM"/>
    <property type="resolution" value="4.50 A"/>
    <property type="chains" value="AE/AG/AI/BE/BG/BI/CG/CI/DE/DG/EE/EG/FE/FG/GE/GG/GI/HE/HG/HI/IE/IG/II/JE/JG/KE/KG/KI/LE/LG=1-438"/>
</dbReference>
<dbReference type="PDB" id="8I7R">
    <property type="method" value="EM"/>
    <property type="resolution" value="6.50 A"/>
    <property type="chains" value="AC/AE/AG/AI/AK/AM/BC/BE/BG/BI/BK/BM/CC/CE/CG/CI/CK/CM/DA/DC/DE/DG/DI/DK/EA/EC/EE/EG/EI/EK=1-438"/>
</dbReference>
<dbReference type="PDB" id="8IYJ">
    <property type="method" value="EM"/>
    <property type="resolution" value="3.50 A"/>
    <property type="chains" value="AA/AC/AE/AG/AI/AK/AM/AO/BC/BE/BG/BI/BK/BM/BO/CC/CE/CG/CI/CK/CM/CO/CQ/DC/DE/DG/DI/DK/DM/DO=1-450"/>
</dbReference>
<dbReference type="PDBsum" id="8I7O"/>
<dbReference type="PDBsum" id="8I7R"/>
<dbReference type="PDBsum" id="8IYJ"/>
<dbReference type="EMDB" id="EMD-35229"/>
<dbReference type="EMDB" id="EMD-35230"/>
<dbReference type="EMDB" id="EMD-35823"/>
<dbReference type="SMR" id="P05214"/>
<dbReference type="BioGRID" id="204374">
    <property type="interactions" value="73"/>
</dbReference>
<dbReference type="BioGRID" id="204377">
    <property type="interactions" value="2"/>
</dbReference>
<dbReference type="FunCoup" id="P05214">
    <property type="interactions" value="347"/>
</dbReference>
<dbReference type="IntAct" id="P05214">
    <property type="interactions" value="69"/>
</dbReference>
<dbReference type="STRING" id="10090.ENSMUSP00000084713"/>
<dbReference type="GlyGen" id="P05214">
    <property type="glycosylation" value="1 site, 1 O-linked glycan (1 site)"/>
</dbReference>
<dbReference type="iPTMnet" id="P05214"/>
<dbReference type="PhosphoSitePlus" id="P05214"/>
<dbReference type="SwissPalm" id="P05214"/>
<dbReference type="REPRODUCTION-2DPAGE" id="P05214"/>
<dbReference type="jPOST" id="P05214"/>
<dbReference type="PaxDb" id="10090-ENSMUSP00000084713"/>
<dbReference type="PeptideAtlas" id="P05214"/>
<dbReference type="ProteomicsDB" id="254819"/>
<dbReference type="Pumba" id="P05214"/>
<dbReference type="Antibodypedia" id="60456">
    <property type="antibodies" value="49 antibodies from 11 providers"/>
</dbReference>
<dbReference type="DNASU" id="22144"/>
<dbReference type="DNASU" id="22147"/>
<dbReference type="Ensembl" id="ENSMUST00000087445.7">
    <property type="protein sequence ID" value="ENSMUSP00000084713.7"/>
    <property type="gene ID" value="ENSMUSG00000067338.7"/>
</dbReference>
<dbReference type="Ensembl" id="ENSMUST00000088246.6">
    <property type="protein sequence ID" value="ENSMUSP00000085580.6"/>
    <property type="gene ID" value="ENSMUSG00000067702.6"/>
</dbReference>
<dbReference type="GeneID" id="22144"/>
<dbReference type="GeneID" id="22147"/>
<dbReference type="KEGG" id="mmu:22144"/>
<dbReference type="KEGG" id="mmu:22147"/>
<dbReference type="UCSC" id="uc009dui.1">
    <property type="organism name" value="mouse"/>
</dbReference>
<dbReference type="CTD" id="22144"/>
<dbReference type="CTD" id="22147"/>
<dbReference type="MGI" id="MGI:1095406">
    <property type="gene designation" value="Tuba3a"/>
</dbReference>
<dbReference type="MGI" id="MGI:1095408">
    <property type="gene designation" value="Tuba3b"/>
</dbReference>
<dbReference type="VEuPathDB" id="HostDB:ENSMUSG00000067338"/>
<dbReference type="VEuPathDB" id="HostDB:ENSMUSG00000067702"/>
<dbReference type="eggNOG" id="KOG1376">
    <property type="taxonomic scope" value="Eukaryota"/>
</dbReference>
<dbReference type="GeneTree" id="ENSGT00950000182825"/>
<dbReference type="HOGENOM" id="CLU_015718_0_0_1"/>
<dbReference type="InParanoid" id="P05214"/>
<dbReference type="OMA" id="YMASCIL"/>
<dbReference type="OrthoDB" id="1844at2759"/>
<dbReference type="PhylomeDB" id="P05214"/>
<dbReference type="TreeFam" id="TF300314"/>
<dbReference type="Reactome" id="R-MMU-190840">
    <property type="pathway name" value="Microtubule-dependent trafficking of connexons from Golgi to the plasma membrane"/>
</dbReference>
<dbReference type="Reactome" id="R-MMU-2132295">
    <property type="pathway name" value="MHC class II antigen presentation"/>
</dbReference>
<dbReference type="Reactome" id="R-MMU-2467813">
    <property type="pathway name" value="Separation of Sister Chromatids"/>
</dbReference>
<dbReference type="Reactome" id="R-MMU-2500257">
    <property type="pathway name" value="Resolution of Sister Chromatid Cohesion"/>
</dbReference>
<dbReference type="Reactome" id="R-MMU-3371497">
    <property type="pathway name" value="HSP90 chaperone cycle for steroid hormone receptors (SHR) in the presence of ligand"/>
</dbReference>
<dbReference type="Reactome" id="R-MMU-380320">
    <property type="pathway name" value="Recruitment of NuMA to mitotic centrosomes"/>
</dbReference>
<dbReference type="Reactome" id="R-MMU-437239">
    <property type="pathway name" value="Recycling pathway of L1"/>
</dbReference>
<dbReference type="Reactome" id="R-MMU-5610787">
    <property type="pathway name" value="Hedgehog 'off' state"/>
</dbReference>
<dbReference type="Reactome" id="R-MMU-5617833">
    <property type="pathway name" value="Cilium Assembly"/>
</dbReference>
<dbReference type="Reactome" id="R-MMU-5620924">
    <property type="pathway name" value="Intraflagellar transport"/>
</dbReference>
<dbReference type="Reactome" id="R-MMU-5626467">
    <property type="pathway name" value="RHO GTPases activate IQGAPs"/>
</dbReference>
<dbReference type="Reactome" id="R-MMU-5663220">
    <property type="pathway name" value="RHO GTPases Activate Formins"/>
</dbReference>
<dbReference type="Reactome" id="R-MMU-6807878">
    <property type="pathway name" value="COPI-mediated anterograde transport"/>
</dbReference>
<dbReference type="Reactome" id="R-MMU-6811434">
    <property type="pathway name" value="COPI-dependent Golgi-to-ER retrograde traffic"/>
</dbReference>
<dbReference type="Reactome" id="R-MMU-6811436">
    <property type="pathway name" value="COPI-independent Golgi-to-ER retrograde traffic"/>
</dbReference>
<dbReference type="Reactome" id="R-MMU-68877">
    <property type="pathway name" value="Mitotic Prometaphase"/>
</dbReference>
<dbReference type="Reactome" id="R-MMU-8852276">
    <property type="pathway name" value="The role of GTSE1 in G2/M progression after G2 checkpoint"/>
</dbReference>
<dbReference type="Reactome" id="R-MMU-8955332">
    <property type="pathway name" value="Carboxyterminal post-translational modifications of tubulin"/>
</dbReference>
<dbReference type="Reactome" id="R-MMU-9646399">
    <property type="pathway name" value="Aggrephagy"/>
</dbReference>
<dbReference type="Reactome" id="R-MMU-9648025">
    <property type="pathway name" value="EML4 and NUDC in mitotic spindle formation"/>
</dbReference>
<dbReference type="Reactome" id="R-MMU-9668328">
    <property type="pathway name" value="Sealing of the nuclear envelope (NE) by ESCRT-III"/>
</dbReference>
<dbReference type="Reactome" id="R-MMU-983189">
    <property type="pathway name" value="Kinesins"/>
</dbReference>
<dbReference type="Reactome" id="R-MMU-9833482">
    <property type="pathway name" value="PKR-mediated signaling"/>
</dbReference>
<dbReference type="BioGRID-ORCS" id="22144">
    <property type="hits" value="1 hit in 79 CRISPR screens"/>
</dbReference>
<dbReference type="BioGRID-ORCS" id="22147">
    <property type="hits" value="4 hits in 80 CRISPR screens"/>
</dbReference>
<dbReference type="CD-CODE" id="DE1E139C">
    <property type="entry name" value="Chromatoid body"/>
</dbReference>
<dbReference type="ChiTaRS" id="Tuba3a">
    <property type="organism name" value="mouse"/>
</dbReference>
<dbReference type="ChiTaRS" id="Tuba3b">
    <property type="organism name" value="mouse"/>
</dbReference>
<dbReference type="PRO" id="PR:P05214"/>
<dbReference type="Proteomes" id="UP000000589">
    <property type="component" value="Chromosome 6"/>
</dbReference>
<dbReference type="RNAct" id="P05214">
    <property type="molecule type" value="protein"/>
</dbReference>
<dbReference type="Bgee" id="ENSMUSG00000067338">
    <property type="expression patterns" value="Expressed in spermatocyte and 51 other cell types or tissues"/>
</dbReference>
<dbReference type="ExpressionAtlas" id="P05214">
    <property type="expression patterns" value="baseline and differential"/>
</dbReference>
<dbReference type="GO" id="GO:0036064">
    <property type="term" value="C:ciliary basal body"/>
    <property type="evidence" value="ECO:0000314"/>
    <property type="project" value="MGI"/>
</dbReference>
<dbReference type="GO" id="GO:0005929">
    <property type="term" value="C:cilium"/>
    <property type="evidence" value="ECO:0000314"/>
    <property type="project" value="MGI"/>
</dbReference>
<dbReference type="GO" id="GO:0005737">
    <property type="term" value="C:cytoplasm"/>
    <property type="evidence" value="ECO:0007669"/>
    <property type="project" value="UniProtKB-KW"/>
</dbReference>
<dbReference type="GO" id="GO:0005874">
    <property type="term" value="C:microtubule"/>
    <property type="evidence" value="ECO:0000314"/>
    <property type="project" value="MGI"/>
</dbReference>
<dbReference type="GO" id="GO:0036126">
    <property type="term" value="C:sperm flagellum"/>
    <property type="evidence" value="ECO:0000314"/>
    <property type="project" value="UniProtKB"/>
</dbReference>
<dbReference type="GO" id="GO:0005525">
    <property type="term" value="F:GTP binding"/>
    <property type="evidence" value="ECO:0007669"/>
    <property type="project" value="UniProtKB-KW"/>
</dbReference>
<dbReference type="GO" id="GO:0016787">
    <property type="term" value="F:hydrolase activity"/>
    <property type="evidence" value="ECO:0007669"/>
    <property type="project" value="UniProtKB-KW"/>
</dbReference>
<dbReference type="GO" id="GO:0046872">
    <property type="term" value="F:metal ion binding"/>
    <property type="evidence" value="ECO:0007669"/>
    <property type="project" value="UniProtKB-KW"/>
</dbReference>
<dbReference type="GO" id="GO:0005200">
    <property type="term" value="F:structural constituent of cytoskeleton"/>
    <property type="evidence" value="ECO:0007669"/>
    <property type="project" value="InterPro"/>
</dbReference>
<dbReference type="GO" id="GO:0030317">
    <property type="term" value="P:flagellated sperm motility"/>
    <property type="evidence" value="ECO:0000314"/>
    <property type="project" value="UniProtKB"/>
</dbReference>
<dbReference type="GO" id="GO:0036098">
    <property type="term" value="P:male germ-line stem cell population maintenance"/>
    <property type="evidence" value="ECO:0000315"/>
    <property type="project" value="MGI"/>
</dbReference>
<dbReference type="CDD" id="cd02186">
    <property type="entry name" value="alpha_tubulin"/>
    <property type="match status" value="1"/>
</dbReference>
<dbReference type="FunFam" id="1.10.287.600:FF:000005">
    <property type="entry name" value="Tubulin alpha chain"/>
    <property type="match status" value="1"/>
</dbReference>
<dbReference type="FunFam" id="3.30.1330.20:FF:000001">
    <property type="entry name" value="Tubulin alpha chain"/>
    <property type="match status" value="1"/>
</dbReference>
<dbReference type="FunFam" id="3.40.50.1440:FF:000002">
    <property type="entry name" value="Tubulin alpha chain"/>
    <property type="match status" value="1"/>
</dbReference>
<dbReference type="Gene3D" id="1.10.287.600">
    <property type="entry name" value="Helix hairpin bin"/>
    <property type="match status" value="1"/>
</dbReference>
<dbReference type="Gene3D" id="3.30.1330.20">
    <property type="entry name" value="Tubulin/FtsZ, C-terminal domain"/>
    <property type="match status" value="1"/>
</dbReference>
<dbReference type="Gene3D" id="3.40.50.1440">
    <property type="entry name" value="Tubulin/FtsZ, GTPase domain"/>
    <property type="match status" value="1"/>
</dbReference>
<dbReference type="InterPro" id="IPR002452">
    <property type="entry name" value="Alpha_tubulin"/>
</dbReference>
<dbReference type="InterPro" id="IPR008280">
    <property type="entry name" value="Tub_FtsZ_C"/>
</dbReference>
<dbReference type="InterPro" id="IPR000217">
    <property type="entry name" value="Tubulin"/>
</dbReference>
<dbReference type="InterPro" id="IPR037103">
    <property type="entry name" value="Tubulin/FtsZ-like_C"/>
</dbReference>
<dbReference type="InterPro" id="IPR018316">
    <property type="entry name" value="Tubulin/FtsZ_2-layer-sand-dom"/>
</dbReference>
<dbReference type="InterPro" id="IPR036525">
    <property type="entry name" value="Tubulin/FtsZ_GTPase_sf"/>
</dbReference>
<dbReference type="InterPro" id="IPR023123">
    <property type="entry name" value="Tubulin_C"/>
</dbReference>
<dbReference type="InterPro" id="IPR017975">
    <property type="entry name" value="Tubulin_CS"/>
</dbReference>
<dbReference type="InterPro" id="IPR003008">
    <property type="entry name" value="Tubulin_FtsZ_GTPase"/>
</dbReference>
<dbReference type="PANTHER" id="PTHR11588">
    <property type="entry name" value="TUBULIN"/>
    <property type="match status" value="1"/>
</dbReference>
<dbReference type="Pfam" id="PF00091">
    <property type="entry name" value="Tubulin"/>
    <property type="match status" value="1"/>
</dbReference>
<dbReference type="Pfam" id="PF03953">
    <property type="entry name" value="Tubulin_C"/>
    <property type="match status" value="1"/>
</dbReference>
<dbReference type="PRINTS" id="PR01162">
    <property type="entry name" value="ALPHATUBULIN"/>
</dbReference>
<dbReference type="PRINTS" id="PR01161">
    <property type="entry name" value="TUBULIN"/>
</dbReference>
<dbReference type="SMART" id="SM00864">
    <property type="entry name" value="Tubulin"/>
    <property type="match status" value="1"/>
</dbReference>
<dbReference type="SMART" id="SM00865">
    <property type="entry name" value="Tubulin_C"/>
    <property type="match status" value="1"/>
</dbReference>
<dbReference type="SUPFAM" id="SSF55307">
    <property type="entry name" value="Tubulin C-terminal domain-like"/>
    <property type="match status" value="1"/>
</dbReference>
<dbReference type="SUPFAM" id="SSF52490">
    <property type="entry name" value="Tubulin nucleotide-binding domain-like"/>
    <property type="match status" value="1"/>
</dbReference>
<dbReference type="PROSITE" id="PS00227">
    <property type="entry name" value="TUBULIN"/>
    <property type="match status" value="1"/>
</dbReference>
<accession>P05214</accession>
<comment type="function">
    <text>Tubulin is the major constituent of microtubules, a cylinder consisting of laterally associated linear protofilaments composed of alpha- and beta-tubulin heterodimers. Microtubules grow by the addition of GTP-tubulin dimers to the microtubule end, where a stabilizing cap forms. Below the cap, tubulin dimers are in GDP-bound state, owing to GTPase activity of alpha-tubulin.</text>
</comment>
<comment type="catalytic activity">
    <reaction evidence="2">
        <text>GTP + H2O = GDP + phosphate + H(+)</text>
        <dbReference type="Rhea" id="RHEA:19669"/>
        <dbReference type="ChEBI" id="CHEBI:15377"/>
        <dbReference type="ChEBI" id="CHEBI:15378"/>
        <dbReference type="ChEBI" id="CHEBI:37565"/>
        <dbReference type="ChEBI" id="CHEBI:43474"/>
        <dbReference type="ChEBI" id="CHEBI:58189"/>
    </reaction>
    <physiologicalReaction direction="left-to-right" evidence="2">
        <dbReference type="Rhea" id="RHEA:19670"/>
    </physiologicalReaction>
</comment>
<comment type="cofactor">
    <cofactor evidence="2">
        <name>Mg(2+)</name>
        <dbReference type="ChEBI" id="CHEBI:18420"/>
    </cofactor>
</comment>
<comment type="subunit">
    <text evidence="17 19">Dimer of alpha and beta chains. A typical microtubule is a hollow water-filled tube with an outer diameter of 25 nm and an inner diameter of 15 nM. Alpha-beta heterodimers associate head-to-tail to form protofilaments running lengthwise along the microtubule wall with the beta-tubulin subunit facing the microtubule plus end conferring a structural polarity. Microtubules usually have 13 protofilaments but different protofilament numbers can be found in some organisms and specialized cells. Component of sperm flagellar doublet microtubules (PubMed:37295417, PubMed:37989994).</text>
</comment>
<comment type="subcellular location">
    <subcellularLocation>
        <location>Cytoplasm</location>
        <location>Cytoskeleton</location>
    </subcellularLocation>
    <subcellularLocation>
        <location evidence="17 19">Cytoplasm</location>
        <location evidence="17 19">Cytoskeleton</location>
        <location evidence="17 19">Flagellum axoneme</location>
    </subcellularLocation>
</comment>
<comment type="tissue specificity">
    <text evidence="18">Alpha-3 and alpha-7 are identical but coded by two different genes, they are testis-specific.</text>
</comment>
<comment type="domain">
    <text evidence="2">The MREC motif may be critical for tubulin autoregulation.</text>
</comment>
<comment type="PTM">
    <text evidence="10 12 16">Some glutamate residues at the C-terminus are polyglycylated, resulting in polyglycine chains on the gamma-carboxyl group. Glycylation is mainly limited to tubulin incorporated into axonemes (cilia and flagella) whereas glutamylation is prevalent in neuronal cells, centrioles, axonemes, and the mitotic spindle. Both modifications can coexist on the same protein on adjacent residues, and lowering polyglycylation levels increases polyglutamylation, and reciprocally. Cilia and flagella glycylation is required for their stability and maintenance. Flagella glycylation controls sperm motility (PubMed:33414192).</text>
</comment>
<comment type="PTM">
    <text evidence="6 8 12">Some glutamate residues at the C-terminus are polyglutamylated, resulting in polyglutamate chains on the gamma-carboxyl group (PubMed:15890843). Polyglutamylation plays a key role in microtubule severing by spastin (SPAST). SPAST preferentially recognizes and acts on microtubules decorated with short polyglutamate tails: severing activity by SPAST increases as the number of glutamates per tubulin rises from one to eight, but decreases beyond this glutamylation threshold (By similarity). Glutamylation is also involved in cilia motility (PubMed:23897886).</text>
</comment>
<comment type="PTM">
    <text evidence="6">Acetylation of alpha chains at Lys-40 is located inside the microtubule lumen. This modification has been correlated with increased microtubule stability, intracellular transport and ciliary assembly.</text>
</comment>
<comment type="PTM">
    <text evidence="2">Methylation of alpha chains at Lys-40 is found in mitotic microtubules and is required for normal mitosis and cytokinesis contributing to genomic stability.</text>
</comment>
<comment type="PTM">
    <text evidence="6">Nitration of Tyr-450 is irreversible and interferes with normal dynein intracellular distribution.</text>
</comment>
<comment type="PTM">
    <text evidence="9 11 13 14 15">Undergoes a tyrosination/detyrosination cycle, the cyclic removal and re-addition of a C-terminal tyrosine residue by the enzymes tubulin tyrosine carboxypeptidase (MATCAP1, VASH1 or VASH2) and tubulin tyrosine ligase (TTL), respectively.</text>
</comment>
<comment type="PTM">
    <molecule>Tubulin alpha-3 chain</molecule>
    <text evidence="6 9 11">Tyrosination promotes microtubule interaction with CAP-Gly domain-containing proteins such as CLIP1, CLIP2 and DCTN1 (PubMed:16954346, PubMed:19564401). Tyrosination regulates the initiation of dynein-dynactin motility via interaction with DCTN1, which brings the dynein-dynactin complex into contact with microtubules. In neurons, tyrosinated tubulins mediate the initiation of retrograde vesicle transport (By similarity).</text>
</comment>
<comment type="PTM">
    <molecule>Detyrosinated tubulin alpha-3 chain</molecule>
    <text evidence="5 13 14">Detyrosination is involved in metaphase plate congression by guiding chromosomes during mitosis: detyrosination promotes interaction with CENPE, promoting pole-proximal transport of chromosomes toward the equator (By similarity). Detyrosination increases microtubules-dependent mechanotransduction in dystrophic cardiac and skeletal muscle (PubMed:26446751). In cardiomyocytes, detyrosinated microtubules are required to resist to contractile compression during contraction: detyrosination promotes association with desmin (DES) at force-generating sarcomeres, leading to buckled microtubules and mechanical resistance to contraction (PubMed:27102488).</text>
</comment>
<comment type="similarity">
    <text evidence="20">Belongs to the tubulin family.</text>
</comment>
<proteinExistence type="evidence at protein level"/>
<reference key="1">
    <citation type="journal article" date="1986" name="Mol. Cell. Biol.">
        <title>Six mouse alpha-tubulin mRNAs encode five distinct isotypes: testis-specific expression of two sister genes.</title>
        <authorList>
            <person name="Villasante A."/>
            <person name="Wang D."/>
            <person name="Dobner P."/>
            <person name="Dolph P."/>
            <person name="Lewis S.A."/>
            <person name="Cowan N.J."/>
        </authorList>
    </citation>
    <scope>NUCLEOTIDE SEQUENCE [MRNA]</scope>
    <scope>TISSUE SPECIFICITY</scope>
</reference>
<reference key="2">
    <citation type="journal article" date="2004" name="Genome Res.">
        <title>The status, quality, and expansion of the NIH full-length cDNA project: the Mammalian Gene Collection (MGC).</title>
        <authorList>
            <consortium name="The MGC Project Team"/>
        </authorList>
    </citation>
    <scope>NUCLEOTIDE SEQUENCE [LARGE SCALE MRNA]</scope>
    <source>
        <tissue>Testis</tissue>
    </source>
</reference>
<reference key="3">
    <citation type="submission" date="2007-07" db="UniProtKB">
        <authorList>
            <person name="Lubec G."/>
            <person name="Klug S."/>
            <person name="Yang J.W."/>
            <person name="Zigmond M."/>
        </authorList>
    </citation>
    <scope>PROTEIN SEQUENCE OF 230-280</scope>
    <scope>IDENTIFICATION BY MASS SPECTROMETRY</scope>
    <source>
        <tissue>Brain</tissue>
        <tissue>Hippocampus</tissue>
    </source>
</reference>
<reference key="4">
    <citation type="journal article" date="2005" name="Science">
        <title>Tubulin polyglutamylase enzymes are members of the TTL domain protein family.</title>
        <authorList>
            <person name="Janke C."/>
            <person name="Rogowski K."/>
            <person name="Wloga D."/>
            <person name="Regnard C."/>
            <person name="Kajava A.V."/>
            <person name="Strub J.-M."/>
            <person name="Temurak N."/>
            <person name="van Dijk J."/>
            <person name="Boucher D."/>
            <person name="van Dorsselaer A."/>
            <person name="Suryavanshi S."/>
            <person name="Gaertig J."/>
            <person name="Edde B."/>
        </authorList>
    </citation>
    <scope>GLUTAMYLATION</scope>
</reference>
<reference key="5">
    <citation type="journal article" date="2006" name="J. Cell Biol.">
        <title>Tubulin tyrosination is a major factor affecting the recruitment of CAP-Gly proteins at microtubule plus ends.</title>
        <authorList>
            <person name="Peris L."/>
            <person name="Thery M."/>
            <person name="Faure J."/>
            <person name="Saoudi Y."/>
            <person name="Lafanechere L."/>
            <person name="Chilton J.K."/>
            <person name="Gordon-Weeks P."/>
            <person name="Galjart N."/>
            <person name="Bornens M."/>
            <person name="Wordeman L."/>
            <person name="Wehland J."/>
            <person name="Andrieux A."/>
            <person name="Job D."/>
        </authorList>
    </citation>
    <scope>TYROSINATION</scope>
</reference>
<reference key="6">
    <citation type="journal article" date="2009" name="Cell">
        <title>Evolutionary divergence of enzymatic mechanisms for posttranslational polyglycylation.</title>
        <authorList>
            <person name="Rogowski K."/>
            <person name="Juge F."/>
            <person name="van Dijk J."/>
            <person name="Wloga D."/>
            <person name="Strub J.-M."/>
            <person name="Levilliers N."/>
            <person name="Thomas D."/>
            <person name="Bre M.-H."/>
            <person name="Van Dorsselaer A."/>
            <person name="Gaertig J."/>
            <person name="Janke C."/>
        </authorList>
    </citation>
    <scope>GLYCYLATION</scope>
</reference>
<reference key="7">
    <citation type="journal article" date="2009" name="J. Cell Biol.">
        <title>Motor-dependent microtubule disassembly driven by tubulin tyrosination.</title>
        <authorList>
            <person name="Peris L."/>
            <person name="Wagenbach M."/>
            <person name="Lafanechere L."/>
            <person name="Brocard J."/>
            <person name="Moore A.T."/>
            <person name="Kozielski F."/>
            <person name="Job D."/>
            <person name="Wordeman L."/>
            <person name="Andrieux A."/>
        </authorList>
    </citation>
    <scope>TYROSINATION</scope>
</reference>
<reference key="8">
    <citation type="journal article" date="2010" name="Cell">
        <title>A tissue-specific atlas of mouse protein phosphorylation and expression.</title>
        <authorList>
            <person name="Huttlin E.L."/>
            <person name="Jedrychowski M.P."/>
            <person name="Elias J.E."/>
            <person name="Goswami T."/>
            <person name="Rad R."/>
            <person name="Beausoleil S.A."/>
            <person name="Villen J."/>
            <person name="Haas W."/>
            <person name="Sowa M.E."/>
            <person name="Gygi S.P."/>
        </authorList>
    </citation>
    <scope>IDENTIFICATION BY MASS SPECTROMETRY [LARGE SCALE ANALYSIS]</scope>
    <source>
        <tissue>Testis</tissue>
    </source>
</reference>
<reference key="9">
    <citation type="journal article" date="2013" name="J. Cell Biol.">
        <title>Tubulin glycylases and glutamylases have distinct functions in stabilization and motility of ependymal cilia.</title>
        <authorList>
            <person name="Bosch Grau M."/>
            <person name="Gonzalez Curto G."/>
            <person name="Rocha C."/>
            <person name="Magiera M.M."/>
            <person name="Marques Sousa P."/>
            <person name="Giordano T."/>
            <person name="Spassky N."/>
            <person name="Janke C."/>
        </authorList>
    </citation>
    <scope>GLYCYLATION</scope>
    <scope>GLUTAMYLATION</scope>
</reference>
<reference key="10">
    <citation type="journal article" date="2015" name="Nat. Commun.">
        <title>Detyrosinated microtubules modulate mechanotransduction in heart and skeletal muscle.</title>
        <authorList>
            <person name="Kerr J.P."/>
            <person name="Robison P."/>
            <person name="Shi G."/>
            <person name="Bogush A.I."/>
            <person name="Kempema A.M."/>
            <person name="Hexum J.K."/>
            <person name="Becerra N."/>
            <person name="Harki D.A."/>
            <person name="Martin S.S."/>
            <person name="Raiteri R."/>
            <person name="Prosser B.L."/>
            <person name="Ward C.W."/>
        </authorList>
    </citation>
    <scope>DETYROSINATION</scope>
</reference>
<reference key="11">
    <citation type="journal article" date="2016" name="Science">
        <title>Detyrosinated microtubules buckle and bear load in contracting cardiomyocytes.</title>
        <authorList>
            <person name="Robison P."/>
            <person name="Caporizzo M.A."/>
            <person name="Ahmadzadeh H."/>
            <person name="Bogush A.I."/>
            <person name="Chen C.Y."/>
            <person name="Margulies K.B."/>
            <person name="Shenoy V.B."/>
            <person name="Prosser B.L."/>
        </authorList>
    </citation>
    <scope>DETYROSINATION</scope>
</reference>
<reference key="12">
    <citation type="journal article" date="2017" name="Science">
        <title>Vasohibins/SVBP are tubulin carboxypeptidases (TCPs) that regulate neuron differentiation.</title>
        <authorList>
            <person name="Aillaud C."/>
            <person name="Bosc C."/>
            <person name="Peris L."/>
            <person name="Bosson A."/>
            <person name="Heemeryck P."/>
            <person name="Van Dijk J."/>
            <person name="Le Friec J."/>
            <person name="Boulan B."/>
            <person name="Vossier F."/>
            <person name="Sanman L.E."/>
            <person name="Syed S."/>
            <person name="Amara N."/>
            <person name="Coute Y."/>
            <person name="Lafanechere L."/>
            <person name="Denarier E."/>
            <person name="Delphin C."/>
            <person name="Pelletier L."/>
            <person name="Humbert S."/>
            <person name="Bogyo M."/>
            <person name="Andrieux A."/>
            <person name="Rogowski K."/>
            <person name="Moutin M.J."/>
        </authorList>
    </citation>
    <scope>DETYROSINATION</scope>
</reference>
<reference key="13">
    <citation type="journal article" date="2021" name="Science">
        <title>Tubulin glycylation controls axonemal dynein activity, flagellar beat, and male fertility.</title>
        <authorList>
            <person name="Gadadhar S."/>
            <person name="Alvarez Viar G."/>
            <person name="Hansen J.N."/>
            <person name="Gong A."/>
            <person name="Kostarev A."/>
            <person name="Ialy-Radio C."/>
            <person name="Leboucher S."/>
            <person name="Whitfield M."/>
            <person name="Ziyyat A."/>
            <person name="Toure A."/>
            <person name="Alvarez L."/>
            <person name="Pigino G."/>
            <person name="Janke C."/>
        </authorList>
    </citation>
    <scope>GLYCYLATION</scope>
</reference>
<reference evidence="26" key="14">
    <citation type="journal article" date="2023" name="Cell">
        <title>Structures of sperm flagellar doublet microtubules expand the genetic spectrum of male infertility.</title>
        <authorList>
            <person name="Zhou L."/>
            <person name="Liu H."/>
            <person name="Liu S."/>
            <person name="Yang X."/>
            <person name="Dong Y."/>
            <person name="Pan Y."/>
            <person name="Xiao Z."/>
            <person name="Zheng B."/>
            <person name="Sun Y."/>
            <person name="Huang P."/>
            <person name="Zhang X."/>
            <person name="Hu J."/>
            <person name="Sun R."/>
            <person name="Feng S."/>
            <person name="Zhu Y."/>
            <person name="Liu M."/>
            <person name="Gui M."/>
            <person name="Wu J."/>
        </authorList>
    </citation>
    <scope>STRUCTURE BY ELECTRON MICROSCOPY (3.50 ANGSTROMS) OF SPERM FLAGELLAR DOUBLET MICROTUBULES</scope>
    <scope>SUBCELLULAR LOCATION</scope>
    <scope>SUBUNIT</scope>
</reference>
<reference evidence="24 25" key="15">
    <citation type="journal article" date="2023" name="Cell Discov.">
        <title>In-cell structural insight into the stability of sperm microtubule doublet.</title>
        <authorList>
            <person name="Tai L."/>
            <person name="Yin G."/>
            <person name="Huang X."/>
            <person name="Sun F."/>
            <person name="Zhu Y."/>
        </authorList>
    </citation>
    <scope>STRUCTURE BY ELECTRON MICROSCOPY (4.50 ANGSTROMS)</scope>
    <scope>FUNCTION</scope>
    <scope>SUBUNIT</scope>
    <scope>SUBCELLULAR LOCATION</scope>
</reference>
<organism>
    <name type="scientific">Mus musculus</name>
    <name type="common">Mouse</name>
    <dbReference type="NCBI Taxonomy" id="10090"/>
    <lineage>
        <taxon>Eukaryota</taxon>
        <taxon>Metazoa</taxon>
        <taxon>Chordata</taxon>
        <taxon>Craniata</taxon>
        <taxon>Vertebrata</taxon>
        <taxon>Euteleostomi</taxon>
        <taxon>Mammalia</taxon>
        <taxon>Eutheria</taxon>
        <taxon>Euarchontoglires</taxon>
        <taxon>Glires</taxon>
        <taxon>Rodentia</taxon>
        <taxon>Myomorpha</taxon>
        <taxon>Muroidea</taxon>
        <taxon>Muridae</taxon>
        <taxon>Murinae</taxon>
        <taxon>Mus</taxon>
        <taxon>Mus</taxon>
    </lineage>
</organism>
<sequence>MRECISIHVGQAGVQIGNACWELYCLEHGIQPDGQMPSDKTIGGGDDSFNTFFSETGAGKHVPRAVFVDLEPTVVDEVRTGTYRQLFHPEQLITGKEDAANNYARGHYTIGKEIVDLVLDRIRKLADLCTGLQGFLIFHSFGGGTGSGFASLLMERLSVDYGKKSKLEFAIYPAPQVSTAVVEPYNSILTTHTTLEHSDCAFMVDNEAIYDICRRNLDIERPTYTNLNRLIGQIVSSITASLRFDGALNVDLTEFQTNLVPYPRIHFPLATYAPVISAEKAYHEQLSVAEITNACFEPANQMVKCDPRHGKYMACCMLYRGDVVPKDVNAAIATIKTKRTIQFVDWCPTGFKVGINYQPPTVVPGGDLAKVQRAVCMLSNTTAIAEAWARLDHKFDLMYAKRAFVHWYVGEGMEEGEFSEAREDLAALEKDYEEVGVDSVEAEAEEGEEY</sequence>
<protein>
    <recommendedName>
        <fullName>Tubulin alpha-3 chain</fullName>
        <ecNumber evidence="2">3.6.5.-</ecNumber>
    </recommendedName>
    <alternativeName>
        <fullName>Alpha-tubulin 3/7</fullName>
    </alternativeName>
    <alternativeName>
        <fullName>Alpha-tubulin isotype M-alpha-3/7</fullName>
    </alternativeName>
    <alternativeName>
        <fullName>Tubulin alpha-3/alpha-7 chain</fullName>
    </alternativeName>
    <component>
        <recommendedName>
            <fullName>Detyrosinated tubulin alpha-3 chain</fullName>
        </recommendedName>
    </component>
</protein>
<evidence type="ECO:0000250" key="1"/>
<evidence type="ECO:0000250" key="2">
    <source>
        <dbReference type="UniProtKB" id="P68363"/>
    </source>
</evidence>
<evidence type="ECO:0000250" key="3">
    <source>
        <dbReference type="UniProtKB" id="P68366"/>
    </source>
</evidence>
<evidence type="ECO:0000250" key="4">
    <source>
        <dbReference type="UniProtKB" id="P68368"/>
    </source>
</evidence>
<evidence type="ECO:0000250" key="5">
    <source>
        <dbReference type="UniProtKB" id="Q6PEY2"/>
    </source>
</evidence>
<evidence type="ECO:0000250" key="6">
    <source>
        <dbReference type="UniProtKB" id="Q71U36"/>
    </source>
</evidence>
<evidence type="ECO:0000250" key="7">
    <source>
        <dbReference type="UniProtKB" id="Q9BQE3"/>
    </source>
</evidence>
<evidence type="ECO:0000269" key="8">
    <source>
    </source>
</evidence>
<evidence type="ECO:0000269" key="9">
    <source>
    </source>
</evidence>
<evidence type="ECO:0000269" key="10">
    <source>
    </source>
</evidence>
<evidence type="ECO:0000269" key="11">
    <source>
    </source>
</evidence>
<evidence type="ECO:0000269" key="12">
    <source>
    </source>
</evidence>
<evidence type="ECO:0000269" key="13">
    <source>
    </source>
</evidence>
<evidence type="ECO:0000269" key="14">
    <source>
    </source>
</evidence>
<evidence type="ECO:0000269" key="15">
    <source>
    </source>
</evidence>
<evidence type="ECO:0000269" key="16">
    <source>
    </source>
</evidence>
<evidence type="ECO:0000269" key="17">
    <source>
    </source>
</evidence>
<evidence type="ECO:0000269" key="18">
    <source>
    </source>
</evidence>
<evidence type="ECO:0000269" key="19">
    <source>
    </source>
</evidence>
<evidence type="ECO:0000305" key="20"/>
<evidence type="ECO:0000305" key="21">
    <source>
    </source>
</evidence>
<evidence type="ECO:0000305" key="22">
    <source>
    </source>
</evidence>
<evidence type="ECO:0000305" key="23">
    <source>
    </source>
</evidence>
<evidence type="ECO:0007744" key="24">
    <source>
        <dbReference type="PDB" id="8I7O"/>
    </source>
</evidence>
<evidence type="ECO:0007744" key="25">
    <source>
        <dbReference type="PDB" id="8I7R"/>
    </source>
</evidence>
<evidence type="ECO:0007744" key="26">
    <source>
        <dbReference type="PDB" id="8IYJ"/>
    </source>
</evidence>
<gene>
    <name type="primary">Tuba3a</name>
    <name type="synonym">Tuba3</name>
</gene>
<gene>
    <name type="primary">Tuba3b</name>
    <name type="synonym">Tuba7</name>
</gene>
<name>TBA3_MOUSE</name>
<feature type="chain" id="PRO_0000048122" description="Tubulin alpha-3 chain">
    <location>
        <begin position="1"/>
        <end position="450"/>
    </location>
</feature>
<feature type="chain" id="PRO_0000437401" description="Detyrosinated tubulin alpha-3 chain" evidence="21 22 23">
    <location>
        <begin position="1"/>
        <end position="449"/>
    </location>
</feature>
<feature type="short sequence motif" description="MREC motif" evidence="2">
    <location>
        <begin position="1"/>
        <end position="4"/>
    </location>
</feature>
<feature type="active site" evidence="2">
    <location>
        <position position="254"/>
    </location>
</feature>
<feature type="binding site" evidence="2">
    <location>
        <position position="11"/>
    </location>
    <ligand>
        <name>GTP</name>
        <dbReference type="ChEBI" id="CHEBI:37565"/>
    </ligand>
</feature>
<feature type="binding site" evidence="2">
    <location>
        <position position="71"/>
    </location>
    <ligand>
        <name>GTP</name>
        <dbReference type="ChEBI" id="CHEBI:37565"/>
    </ligand>
</feature>
<feature type="binding site" evidence="2">
    <location>
        <position position="71"/>
    </location>
    <ligand>
        <name>Mg(2+)</name>
        <dbReference type="ChEBI" id="CHEBI:18420"/>
    </ligand>
</feature>
<feature type="binding site" evidence="2">
    <location>
        <position position="140"/>
    </location>
    <ligand>
        <name>GTP</name>
        <dbReference type="ChEBI" id="CHEBI:37565"/>
    </ligand>
</feature>
<feature type="binding site" evidence="2">
    <location>
        <position position="144"/>
    </location>
    <ligand>
        <name>GTP</name>
        <dbReference type="ChEBI" id="CHEBI:37565"/>
    </ligand>
</feature>
<feature type="binding site" evidence="2">
    <location>
        <position position="145"/>
    </location>
    <ligand>
        <name>GTP</name>
        <dbReference type="ChEBI" id="CHEBI:37565"/>
    </ligand>
</feature>
<feature type="binding site" evidence="2">
    <location>
        <position position="179"/>
    </location>
    <ligand>
        <name>GTP</name>
        <dbReference type="ChEBI" id="CHEBI:37565"/>
    </ligand>
</feature>
<feature type="binding site" evidence="2">
    <location>
        <position position="206"/>
    </location>
    <ligand>
        <name>GTP</name>
        <dbReference type="ChEBI" id="CHEBI:37565"/>
    </ligand>
</feature>
<feature type="binding site" evidence="2">
    <location>
        <position position="228"/>
    </location>
    <ligand>
        <name>GTP</name>
        <dbReference type="ChEBI" id="CHEBI:37565"/>
    </ligand>
</feature>
<feature type="site" description="Involved in polymerization" evidence="1">
    <location>
        <position position="450"/>
    </location>
</feature>
<feature type="modified residue" description="N6-acetyllysine" evidence="7">
    <location>
        <position position="40"/>
    </location>
</feature>
<feature type="modified residue" description="Phosphoserine" evidence="3">
    <location>
        <position position="48"/>
    </location>
</feature>
<feature type="modified residue" description="3'-nitrotyrosine" evidence="4">
    <location>
        <position position="83"/>
    </location>
</feature>
<feature type="modified residue" description="Phosphotyrosine" evidence="7">
    <location>
        <position position="432"/>
    </location>
</feature>
<feature type="modified residue" description="Phosphoserine" evidence="7">
    <location>
        <position position="439"/>
    </location>
</feature>
<feature type="modified residue" description="3'-nitrotyrosine" evidence="6">
    <location>
        <position position="450"/>
    </location>
</feature>
<keyword id="KW-0002">3D-structure</keyword>
<keyword id="KW-0007">Acetylation</keyword>
<keyword id="KW-0966">Cell projection</keyword>
<keyword id="KW-0969">Cilium</keyword>
<keyword id="KW-0963">Cytoplasm</keyword>
<keyword id="KW-0206">Cytoskeleton</keyword>
<keyword id="KW-0903">Direct protein sequencing</keyword>
<keyword id="KW-0282">Flagellum</keyword>
<keyword id="KW-0342">GTP-binding</keyword>
<keyword id="KW-0378">Hydrolase</keyword>
<keyword id="KW-0460">Magnesium</keyword>
<keyword id="KW-0479">Metal-binding</keyword>
<keyword id="KW-0488">Methylation</keyword>
<keyword id="KW-0493">Microtubule</keyword>
<keyword id="KW-0944">Nitration</keyword>
<keyword id="KW-0547">Nucleotide-binding</keyword>
<keyword id="KW-0597">Phosphoprotein</keyword>
<keyword id="KW-1185">Reference proteome</keyword>